<accession>Q0T0F8</accession>
<feature type="chain" id="PRO_0000339860" description="UPF0597 protein YhaM">
    <location>
        <begin position="1"/>
        <end position="436"/>
    </location>
</feature>
<proteinExistence type="inferred from homology"/>
<reference key="1">
    <citation type="journal article" date="2006" name="BMC Genomics">
        <title>Complete genome sequence of Shigella flexneri 5b and comparison with Shigella flexneri 2a.</title>
        <authorList>
            <person name="Nie H."/>
            <person name="Yang F."/>
            <person name="Zhang X."/>
            <person name="Yang J."/>
            <person name="Chen L."/>
            <person name="Wang J."/>
            <person name="Xiong Z."/>
            <person name="Peng J."/>
            <person name="Sun L."/>
            <person name="Dong J."/>
            <person name="Xue Y."/>
            <person name="Xu X."/>
            <person name="Chen S."/>
            <person name="Yao Z."/>
            <person name="Shen Y."/>
            <person name="Jin Q."/>
        </authorList>
    </citation>
    <scope>NUCLEOTIDE SEQUENCE [LARGE SCALE GENOMIC DNA]</scope>
    <source>
        <strain>8401</strain>
    </source>
</reference>
<name>YHAM_SHIF8</name>
<comment type="similarity">
    <text evidence="1">Belongs to the UPF0597 family.</text>
</comment>
<organism>
    <name type="scientific">Shigella flexneri serotype 5b (strain 8401)</name>
    <dbReference type="NCBI Taxonomy" id="373384"/>
    <lineage>
        <taxon>Bacteria</taxon>
        <taxon>Pseudomonadati</taxon>
        <taxon>Pseudomonadota</taxon>
        <taxon>Gammaproteobacteria</taxon>
        <taxon>Enterobacterales</taxon>
        <taxon>Enterobacteriaceae</taxon>
        <taxon>Shigella</taxon>
    </lineage>
</organism>
<sequence>MFDSTLNPLWQRYILAVQEEVKPALGCTEPISLALAAAVAAAELEGPVERVEAWVSPNLMKNGLGVTVPGTGMVGLPIAAALGALGGNANAGLEVLKDATAQAIADAKALLAAGKVSVKIQEPCNEILFSRAKVWNGEKWACVTIVGGHTNIVHIETHNGVVFTHQACVAEGEQESPLTVLSRTTLAEILKFVNEVPFAAIRFILDSAKLNCALSQEGLSGKWGLHIGATLEKQCERGLLAKDLSSSIVIRTSAASDARMGGATLPAMSNSGSGNQGITAIMPVVVVAEHFGADDERLARALMLSHLSAIYIHNQLPRLSALCAATTAAMGAAAGMAWLVDGRYETISMAISSMIGDVSGMICDGASNSCAMKVSTSASAAWKAVLMALDDTAVTGNEGIVAHDVEQSIANLCALASHSMQQTDRQIIEIMASKAR</sequence>
<protein>
    <recommendedName>
        <fullName evidence="1">UPF0597 protein YhaM</fullName>
    </recommendedName>
</protein>
<gene>
    <name evidence="1" type="primary">yhaM</name>
    <name type="ordered locus">SFV_3151</name>
</gene>
<evidence type="ECO:0000255" key="1">
    <source>
        <dbReference type="HAMAP-Rule" id="MF_01845"/>
    </source>
</evidence>
<dbReference type="EMBL" id="CP000266">
    <property type="protein sequence ID" value="ABF05207.1"/>
    <property type="molecule type" value="Genomic_DNA"/>
</dbReference>
<dbReference type="KEGG" id="sfv:SFV_3151"/>
<dbReference type="HOGENOM" id="CLU_051840_0_0_6"/>
<dbReference type="Proteomes" id="UP000000659">
    <property type="component" value="Chromosome"/>
</dbReference>
<dbReference type="GO" id="GO:0080146">
    <property type="term" value="F:L-cysteine desulfhydrase activity"/>
    <property type="evidence" value="ECO:0007669"/>
    <property type="project" value="TreeGrafter"/>
</dbReference>
<dbReference type="GO" id="GO:0019450">
    <property type="term" value="P:L-cysteine catabolic process to pyruvate"/>
    <property type="evidence" value="ECO:0007669"/>
    <property type="project" value="TreeGrafter"/>
</dbReference>
<dbReference type="HAMAP" id="MF_01845">
    <property type="entry name" value="UPF0597"/>
    <property type="match status" value="1"/>
</dbReference>
<dbReference type="InterPro" id="IPR005130">
    <property type="entry name" value="Ser_deHydtase-like_asu"/>
</dbReference>
<dbReference type="InterPro" id="IPR021144">
    <property type="entry name" value="UPF0597"/>
</dbReference>
<dbReference type="PANTHER" id="PTHR30501">
    <property type="entry name" value="UPF0597 PROTEIN YHAM"/>
    <property type="match status" value="1"/>
</dbReference>
<dbReference type="PANTHER" id="PTHR30501:SF2">
    <property type="entry name" value="UPF0597 PROTEIN YHAM"/>
    <property type="match status" value="1"/>
</dbReference>
<dbReference type="Pfam" id="PF03313">
    <property type="entry name" value="SDH_alpha"/>
    <property type="match status" value="1"/>
</dbReference>
<dbReference type="PIRSF" id="PIRSF006054">
    <property type="entry name" value="UCP006054"/>
    <property type="match status" value="1"/>
</dbReference>